<protein>
    <recommendedName>
        <fullName evidence="1">DNA ligase</fullName>
        <ecNumber evidence="1">6.5.1.2</ecNumber>
    </recommendedName>
    <alternativeName>
        <fullName evidence="1">Polydeoxyribonucleotide synthase [NAD(+)]</fullName>
    </alternativeName>
</protein>
<evidence type="ECO:0000255" key="1">
    <source>
        <dbReference type="HAMAP-Rule" id="MF_01588"/>
    </source>
</evidence>
<reference key="1">
    <citation type="submission" date="2007-09" db="EMBL/GenBank/DDBJ databases">
        <title>Complete genome sequence of Rickettsia canadensis.</title>
        <authorList>
            <person name="Madan A."/>
            <person name="Fahey J."/>
            <person name="Helton E."/>
            <person name="Ketteman M."/>
            <person name="Madan A."/>
            <person name="Rodrigues S."/>
            <person name="Sanchez A."/>
            <person name="Whiting M."/>
            <person name="Dasch G."/>
            <person name="Eremeeva M."/>
        </authorList>
    </citation>
    <scope>NUCLEOTIDE SEQUENCE [LARGE SCALE GENOMIC DNA]</scope>
    <source>
        <strain>McKiel</strain>
    </source>
</reference>
<keyword id="KW-0227">DNA damage</keyword>
<keyword id="KW-0234">DNA repair</keyword>
<keyword id="KW-0235">DNA replication</keyword>
<keyword id="KW-0436">Ligase</keyword>
<keyword id="KW-0460">Magnesium</keyword>
<keyword id="KW-0464">Manganese</keyword>
<keyword id="KW-0479">Metal-binding</keyword>
<keyword id="KW-0520">NAD</keyword>
<keyword id="KW-0862">Zinc</keyword>
<organism>
    <name type="scientific">Rickettsia canadensis (strain McKiel)</name>
    <dbReference type="NCBI Taxonomy" id="293613"/>
    <lineage>
        <taxon>Bacteria</taxon>
        <taxon>Pseudomonadati</taxon>
        <taxon>Pseudomonadota</taxon>
        <taxon>Alphaproteobacteria</taxon>
        <taxon>Rickettsiales</taxon>
        <taxon>Rickettsiaceae</taxon>
        <taxon>Rickettsieae</taxon>
        <taxon>Rickettsia</taxon>
        <taxon>belli group</taxon>
    </lineage>
</organism>
<sequence length="689" mass="78019">MQNIYLISEKEAKKLLKELADKIERYNHAYYIENNHLVSDAEYDQLFNTNLKLEQKFPHLILENSPSKKVGAKIANKFAKVTHQAPMLSLSNVFDEQDVKDFVDRIKNFLRLNEFAPIFCEPKIDGLSFSAIYKNGLLTIGATRGDGYIGEDMTANIKTIKNFPHKINNAPEFLEVRGEIYIEKQDFFNLNKEQEEQGRDKFANPRNAAAGSLRQLDSSVTAKRPLKYFVYSGGATEQNIASSQNELLKKLKEFGFRVNEISKLADSEEEIFAFYEYLKTNRENLSYEIDGVVYKLNDFALQNRMGFIARAPRFATAHKFPAIVGQTKLLSITVQVGRTGTLTPVAELEPIEIGGVTVSRATLHNFQEIIRKDVRIRDYVFLQRAGDVIPQIIGVDIGKRSTDATTFNTPLFCPSCNSKLHYIPEDIIIRCDNVLNCPAQNYERIRHFVSKNAMDIEGLGRKQVEFLIDKGLISNPLDIFLLKEKNEASLTKLENMDGWGRKSVENLFKNIEESRNVSLPRFIYALGIRHIGEQNAKLLAREFESYNNFISQIELLSKNDSNIYQKLNNLEGIGDKILVDIINFFDVKENIELIKKLGEVLNIEDYKETKEHSSLTGKIVVFTGSLPTTSRVEAKAMAEKLGAKVAVSVSSNTDLVIAGVDAGSKLKKAKELGIKIIDEEEWLTIVNNV</sequence>
<name>DNLJ_RICCK</name>
<proteinExistence type="inferred from homology"/>
<gene>
    <name evidence="1" type="primary">ligA</name>
    <name type="ordered locus">A1E_04715</name>
</gene>
<comment type="function">
    <text evidence="1">DNA ligase that catalyzes the formation of phosphodiester linkages between 5'-phosphoryl and 3'-hydroxyl groups in double-stranded DNA using NAD as a coenzyme and as the energy source for the reaction. It is essential for DNA replication and repair of damaged DNA.</text>
</comment>
<comment type="catalytic activity">
    <reaction evidence="1">
        <text>NAD(+) + (deoxyribonucleotide)n-3'-hydroxyl + 5'-phospho-(deoxyribonucleotide)m = (deoxyribonucleotide)n+m + AMP + beta-nicotinamide D-nucleotide.</text>
        <dbReference type="EC" id="6.5.1.2"/>
    </reaction>
</comment>
<comment type="cofactor">
    <cofactor evidence="1">
        <name>Mg(2+)</name>
        <dbReference type="ChEBI" id="CHEBI:18420"/>
    </cofactor>
    <cofactor evidence="1">
        <name>Mn(2+)</name>
        <dbReference type="ChEBI" id="CHEBI:29035"/>
    </cofactor>
</comment>
<comment type="similarity">
    <text evidence="1">Belongs to the NAD-dependent DNA ligase family. LigA subfamily.</text>
</comment>
<accession>A8EZT5</accession>
<feature type="chain" id="PRO_0000313408" description="DNA ligase">
    <location>
        <begin position="1"/>
        <end position="689"/>
    </location>
</feature>
<feature type="domain" description="BRCT" evidence="1">
    <location>
        <begin position="610"/>
        <end position="689"/>
    </location>
</feature>
<feature type="active site" description="N6-AMP-lysine intermediate" evidence="1">
    <location>
        <position position="123"/>
    </location>
</feature>
<feature type="binding site" evidence="1">
    <location>
        <begin position="40"/>
        <end position="44"/>
    </location>
    <ligand>
        <name>NAD(+)</name>
        <dbReference type="ChEBI" id="CHEBI:57540"/>
    </ligand>
</feature>
<feature type="binding site" evidence="1">
    <location>
        <begin position="89"/>
        <end position="90"/>
    </location>
    <ligand>
        <name>NAD(+)</name>
        <dbReference type="ChEBI" id="CHEBI:57540"/>
    </ligand>
</feature>
<feature type="binding site" evidence="1">
    <location>
        <position position="121"/>
    </location>
    <ligand>
        <name>NAD(+)</name>
        <dbReference type="ChEBI" id="CHEBI:57540"/>
    </ligand>
</feature>
<feature type="binding site" evidence="1">
    <location>
        <position position="144"/>
    </location>
    <ligand>
        <name>NAD(+)</name>
        <dbReference type="ChEBI" id="CHEBI:57540"/>
    </ligand>
</feature>
<feature type="binding site" evidence="1">
    <location>
        <position position="179"/>
    </location>
    <ligand>
        <name>NAD(+)</name>
        <dbReference type="ChEBI" id="CHEBI:57540"/>
    </ligand>
</feature>
<feature type="binding site" evidence="1">
    <location>
        <position position="295"/>
    </location>
    <ligand>
        <name>NAD(+)</name>
        <dbReference type="ChEBI" id="CHEBI:57540"/>
    </ligand>
</feature>
<feature type="binding site" evidence="1">
    <location>
        <position position="319"/>
    </location>
    <ligand>
        <name>NAD(+)</name>
        <dbReference type="ChEBI" id="CHEBI:57540"/>
    </ligand>
</feature>
<feature type="binding site" evidence="1">
    <location>
        <position position="413"/>
    </location>
    <ligand>
        <name>Zn(2+)</name>
        <dbReference type="ChEBI" id="CHEBI:29105"/>
    </ligand>
</feature>
<feature type="binding site" evidence="1">
    <location>
        <position position="416"/>
    </location>
    <ligand>
        <name>Zn(2+)</name>
        <dbReference type="ChEBI" id="CHEBI:29105"/>
    </ligand>
</feature>
<feature type="binding site" evidence="1">
    <location>
        <position position="431"/>
    </location>
    <ligand>
        <name>Zn(2+)</name>
        <dbReference type="ChEBI" id="CHEBI:29105"/>
    </ligand>
</feature>
<feature type="binding site" evidence="1">
    <location>
        <position position="437"/>
    </location>
    <ligand>
        <name>Zn(2+)</name>
        <dbReference type="ChEBI" id="CHEBI:29105"/>
    </ligand>
</feature>
<dbReference type="EC" id="6.5.1.2" evidence="1"/>
<dbReference type="EMBL" id="CP000409">
    <property type="protein sequence ID" value="ABV73868.1"/>
    <property type="molecule type" value="Genomic_DNA"/>
</dbReference>
<dbReference type="RefSeq" id="WP_012149063.1">
    <property type="nucleotide sequence ID" value="NC_009879.1"/>
</dbReference>
<dbReference type="SMR" id="A8EZT5"/>
<dbReference type="STRING" id="293613.A1E_04715"/>
<dbReference type="KEGG" id="rcm:A1E_04715"/>
<dbReference type="eggNOG" id="COG0272">
    <property type="taxonomic scope" value="Bacteria"/>
</dbReference>
<dbReference type="HOGENOM" id="CLU_007764_2_1_5"/>
<dbReference type="Proteomes" id="UP000007056">
    <property type="component" value="Chromosome"/>
</dbReference>
<dbReference type="GO" id="GO:0005829">
    <property type="term" value="C:cytosol"/>
    <property type="evidence" value="ECO:0007669"/>
    <property type="project" value="TreeGrafter"/>
</dbReference>
<dbReference type="GO" id="GO:0003911">
    <property type="term" value="F:DNA ligase (NAD+) activity"/>
    <property type="evidence" value="ECO:0007669"/>
    <property type="project" value="UniProtKB-UniRule"/>
</dbReference>
<dbReference type="GO" id="GO:0046872">
    <property type="term" value="F:metal ion binding"/>
    <property type="evidence" value="ECO:0007669"/>
    <property type="project" value="UniProtKB-KW"/>
</dbReference>
<dbReference type="GO" id="GO:0006281">
    <property type="term" value="P:DNA repair"/>
    <property type="evidence" value="ECO:0007669"/>
    <property type="project" value="UniProtKB-KW"/>
</dbReference>
<dbReference type="GO" id="GO:0006260">
    <property type="term" value="P:DNA replication"/>
    <property type="evidence" value="ECO:0007669"/>
    <property type="project" value="UniProtKB-KW"/>
</dbReference>
<dbReference type="CDD" id="cd17748">
    <property type="entry name" value="BRCT_DNA_ligase_like"/>
    <property type="match status" value="1"/>
</dbReference>
<dbReference type="CDD" id="cd00114">
    <property type="entry name" value="LIGANc"/>
    <property type="match status" value="1"/>
</dbReference>
<dbReference type="FunFam" id="1.10.150.20:FF:000007">
    <property type="entry name" value="DNA ligase"/>
    <property type="match status" value="1"/>
</dbReference>
<dbReference type="FunFam" id="2.40.50.140:FF:000012">
    <property type="entry name" value="DNA ligase"/>
    <property type="match status" value="1"/>
</dbReference>
<dbReference type="FunFam" id="3.30.470.30:FF:000001">
    <property type="entry name" value="DNA ligase"/>
    <property type="match status" value="1"/>
</dbReference>
<dbReference type="Gene3D" id="6.20.10.30">
    <property type="match status" value="1"/>
</dbReference>
<dbReference type="Gene3D" id="1.10.150.20">
    <property type="entry name" value="5' to 3' exonuclease, C-terminal subdomain"/>
    <property type="match status" value="2"/>
</dbReference>
<dbReference type="Gene3D" id="3.40.50.10190">
    <property type="entry name" value="BRCT domain"/>
    <property type="match status" value="1"/>
</dbReference>
<dbReference type="Gene3D" id="3.30.470.30">
    <property type="entry name" value="DNA ligase/mRNA capping enzyme"/>
    <property type="match status" value="1"/>
</dbReference>
<dbReference type="Gene3D" id="1.10.287.610">
    <property type="entry name" value="Helix hairpin bin"/>
    <property type="match status" value="1"/>
</dbReference>
<dbReference type="Gene3D" id="2.40.50.140">
    <property type="entry name" value="Nucleic acid-binding proteins"/>
    <property type="match status" value="1"/>
</dbReference>
<dbReference type="HAMAP" id="MF_01588">
    <property type="entry name" value="DNA_ligase_A"/>
    <property type="match status" value="1"/>
</dbReference>
<dbReference type="InterPro" id="IPR001357">
    <property type="entry name" value="BRCT_dom"/>
</dbReference>
<dbReference type="InterPro" id="IPR036420">
    <property type="entry name" value="BRCT_dom_sf"/>
</dbReference>
<dbReference type="InterPro" id="IPR041663">
    <property type="entry name" value="DisA/LigA_HHH"/>
</dbReference>
<dbReference type="InterPro" id="IPR001679">
    <property type="entry name" value="DNA_ligase"/>
</dbReference>
<dbReference type="InterPro" id="IPR018239">
    <property type="entry name" value="DNA_ligase_AS"/>
</dbReference>
<dbReference type="InterPro" id="IPR033136">
    <property type="entry name" value="DNA_ligase_CS"/>
</dbReference>
<dbReference type="InterPro" id="IPR013839">
    <property type="entry name" value="DNAligase_adenylation"/>
</dbReference>
<dbReference type="InterPro" id="IPR013840">
    <property type="entry name" value="DNAligase_N"/>
</dbReference>
<dbReference type="InterPro" id="IPR012340">
    <property type="entry name" value="NA-bd_OB-fold"/>
</dbReference>
<dbReference type="InterPro" id="IPR004150">
    <property type="entry name" value="NAD_DNA_ligase_OB"/>
</dbReference>
<dbReference type="InterPro" id="IPR010994">
    <property type="entry name" value="RuvA_2-like"/>
</dbReference>
<dbReference type="InterPro" id="IPR004149">
    <property type="entry name" value="Znf_DNAligase_C4"/>
</dbReference>
<dbReference type="NCBIfam" id="TIGR00575">
    <property type="entry name" value="dnlj"/>
    <property type="match status" value="1"/>
</dbReference>
<dbReference type="NCBIfam" id="NF005932">
    <property type="entry name" value="PRK07956.1"/>
    <property type="match status" value="1"/>
</dbReference>
<dbReference type="PANTHER" id="PTHR23389">
    <property type="entry name" value="CHROMOSOME TRANSMISSION FIDELITY FACTOR 18"/>
    <property type="match status" value="1"/>
</dbReference>
<dbReference type="PANTHER" id="PTHR23389:SF9">
    <property type="entry name" value="DNA LIGASE"/>
    <property type="match status" value="1"/>
</dbReference>
<dbReference type="Pfam" id="PF00533">
    <property type="entry name" value="BRCT"/>
    <property type="match status" value="1"/>
</dbReference>
<dbReference type="Pfam" id="PF01653">
    <property type="entry name" value="DNA_ligase_aden"/>
    <property type="match status" value="1"/>
</dbReference>
<dbReference type="Pfam" id="PF03120">
    <property type="entry name" value="DNA_ligase_OB"/>
    <property type="match status" value="1"/>
</dbReference>
<dbReference type="Pfam" id="PF03119">
    <property type="entry name" value="DNA_ligase_ZBD"/>
    <property type="match status" value="1"/>
</dbReference>
<dbReference type="Pfam" id="PF12826">
    <property type="entry name" value="HHH_2"/>
    <property type="match status" value="1"/>
</dbReference>
<dbReference type="PIRSF" id="PIRSF001604">
    <property type="entry name" value="LigA"/>
    <property type="match status" value="1"/>
</dbReference>
<dbReference type="SMART" id="SM00292">
    <property type="entry name" value="BRCT"/>
    <property type="match status" value="1"/>
</dbReference>
<dbReference type="SMART" id="SM00532">
    <property type="entry name" value="LIGANc"/>
    <property type="match status" value="1"/>
</dbReference>
<dbReference type="SUPFAM" id="SSF52113">
    <property type="entry name" value="BRCT domain"/>
    <property type="match status" value="1"/>
</dbReference>
<dbReference type="SUPFAM" id="SSF56091">
    <property type="entry name" value="DNA ligase/mRNA capping enzyme, catalytic domain"/>
    <property type="match status" value="1"/>
</dbReference>
<dbReference type="SUPFAM" id="SSF50249">
    <property type="entry name" value="Nucleic acid-binding proteins"/>
    <property type="match status" value="1"/>
</dbReference>
<dbReference type="SUPFAM" id="SSF47781">
    <property type="entry name" value="RuvA domain 2-like"/>
    <property type="match status" value="1"/>
</dbReference>
<dbReference type="PROSITE" id="PS50172">
    <property type="entry name" value="BRCT"/>
    <property type="match status" value="1"/>
</dbReference>
<dbReference type="PROSITE" id="PS01055">
    <property type="entry name" value="DNA_LIGASE_N1"/>
    <property type="match status" value="1"/>
</dbReference>
<dbReference type="PROSITE" id="PS01056">
    <property type="entry name" value="DNA_LIGASE_N2"/>
    <property type="match status" value="1"/>
</dbReference>